<proteinExistence type="inferred from homology"/>
<keyword id="KW-0998">Cell outer membrane</keyword>
<keyword id="KW-0406">Ion transport</keyword>
<keyword id="KW-0408">Iron</keyword>
<keyword id="KW-0410">Iron transport</keyword>
<keyword id="KW-0472">Membrane</keyword>
<keyword id="KW-0675">Receptor</keyword>
<keyword id="KW-0732">Signal</keyword>
<keyword id="KW-0798">TonB box</keyword>
<keyword id="KW-0812">Transmembrane</keyword>
<keyword id="KW-1134">Transmembrane beta strand</keyword>
<keyword id="KW-0813">Transport</keyword>
<sequence>MSASRFMLRPLTRALLMHGATRTRLAGTGLGLALTLTAAPYVQAQEWTLNIPSQPLAQALQTLGQQTSLQIIYSPESLQGLRSTALNGRYQDDESLKAMLNGTGIRYQRDGNTVTVLGPATGSAMELAPTNVNASRLGATTEGSNSYTTGGVTIGKGVHSLKETPQSVTVMTRKMLDDQNLNTIEQVMEKTPGITVYDSPMGGKYFYSRGFRMSGQYQYDGVPLDIGSSYVQADSFNSDMAIYDRVEVLRGAAGMMKGAGGTAGGVNFVRKRGQDTAHTQLSLSAGTWDNYRGQVDTGGPLNDSGTIRGRAVVTEQTRQYFYDVGSRKDQIYYGALDFDLSPDTTLGLGFAWEDVDATPCWGGLPRYADGSDLHLKRSTCLNTAWNNQRSKRATYFADLKHQFNDDWSLKVAGVYSRNTQDMEYAFPSGAVPVGATATNTLMLGSIYDYDQRDYGFDAYVDGKFDAFGQQHELTIGANASRSHKDDFYAVAALPQRQNVLDPNHHIPQPDESYYLANASRGGPVDMHIKQYGAYSIARLKLADPLTLVLGSRVSWYKSDTDSVQYFRGEGTQVDTKSTETGQVTPFAGVLFDLNDNLTAYASYTDIFTPQGAYKTIDGSTLKPLVGQSYELGIKGEWFDGRLNSTFNLFRTLQKDAAQDDPRCEDSSCSINSGKVRAQGFEAEVSGEVIDRLQLLAGYTYTQTKVLEDADATQDGVVYNSYVPRHLLRVWGDYSLSGPLDRVTIGAGVNAQTGNYRTSPIGGDNIDGAGYAVWNGRIGYRIDDTWSVALNGNNLFDKRYYSTIGTEGFGNFYGDPRNFVMSVKADF</sequence>
<feature type="signal peptide" evidence="1">
    <location>
        <begin position="1"/>
        <end position="44"/>
    </location>
</feature>
<feature type="chain" id="PRO_0000034768" description="Ferric-pyoverdine M114 receptor PbuA">
    <location>
        <begin position="45"/>
        <end position="826"/>
    </location>
</feature>
<feature type="domain" description="TBDR plug" evidence="2">
    <location>
        <begin position="160"/>
        <end position="271"/>
    </location>
</feature>
<feature type="domain" description="TBDR beta-barrel" evidence="2">
    <location>
        <begin position="276"/>
        <end position="826"/>
    </location>
</feature>
<feature type="short sequence motif" description="TonB box">
    <location>
        <begin position="110"/>
        <end position="119"/>
    </location>
</feature>
<feature type="short sequence motif" description="TonB C-terminal box">
    <location>
        <begin position="809"/>
        <end position="826"/>
    </location>
</feature>
<gene>
    <name type="primary">pbuA</name>
</gene>
<reference key="1">
    <citation type="journal article" date="1994" name="Mol. Gen. Genet.">
        <title>Nucleotide sequence analysis and potential environmental distribution of a ferric pseudobactin receptor gene of Pseudomonas sp. strain M114.</title>
        <authorList>
            <person name="Morris J."/>
            <person name="Donnelly D.F."/>
            <person name="O'Neill E."/>
            <person name="McConnell F."/>
            <person name="O'Gara F."/>
        </authorList>
    </citation>
    <scope>NUCLEOTIDE SEQUENCE [GENOMIC DNA]</scope>
</reference>
<comment type="function">
    <text>Specific receptor for the siderophore ferric pyoverdine (pseudobactin) M114.</text>
</comment>
<comment type="subcellular location">
    <subcellularLocation>
        <location evidence="2">Cell outer membrane</location>
        <topology evidence="2">Multi-pass membrane protein</topology>
    </subcellularLocation>
</comment>
<comment type="similarity">
    <text evidence="4">Belongs to the TonB-dependent receptor family.</text>
</comment>
<organism>
    <name type="scientific">Pseudomonas sp. (strain M114)</name>
    <dbReference type="NCBI Taxonomy" id="74569"/>
    <lineage>
        <taxon>Bacteria</taxon>
        <taxon>Pseudomonadati</taxon>
        <taxon>Pseudomonadota</taxon>
    </lineage>
</organism>
<evidence type="ECO:0000250" key="1"/>
<evidence type="ECO:0000255" key="2">
    <source>
        <dbReference type="PROSITE-ProRule" id="PRU01360"/>
    </source>
</evidence>
<evidence type="ECO:0000303" key="3">
    <source>
    </source>
</evidence>
<evidence type="ECO:0000305" key="4"/>
<accession>Q08017</accession>
<name>PBUA_PSEU4</name>
<protein>
    <recommendedName>
        <fullName evidence="4">Ferric-pyoverdine M114 receptor PbuA</fullName>
    </recommendedName>
    <alternativeName>
        <fullName evidence="3">Ferric-pseudobactin M114 receptor PbuA</fullName>
    </alternativeName>
</protein>
<dbReference type="EMBL" id="X73412">
    <property type="protein sequence ID" value="CAA51812.1"/>
    <property type="molecule type" value="Genomic_DNA"/>
</dbReference>
<dbReference type="PIR" id="S41569">
    <property type="entry name" value="S41569"/>
</dbReference>
<dbReference type="SMR" id="Q08017"/>
<dbReference type="GO" id="GO:0009279">
    <property type="term" value="C:cell outer membrane"/>
    <property type="evidence" value="ECO:0007669"/>
    <property type="project" value="UniProtKB-SubCell"/>
</dbReference>
<dbReference type="GO" id="GO:0015344">
    <property type="term" value="F:siderophore uptake transmembrane transporter activity"/>
    <property type="evidence" value="ECO:0007669"/>
    <property type="project" value="TreeGrafter"/>
</dbReference>
<dbReference type="GO" id="GO:0038023">
    <property type="term" value="F:signaling receptor activity"/>
    <property type="evidence" value="ECO:0007669"/>
    <property type="project" value="InterPro"/>
</dbReference>
<dbReference type="CDD" id="cd01347">
    <property type="entry name" value="ligand_gated_channel"/>
    <property type="match status" value="1"/>
</dbReference>
<dbReference type="FunFam" id="2.170.130.10:FF:000010">
    <property type="entry name" value="Ferripyoverdine receptor"/>
    <property type="match status" value="1"/>
</dbReference>
<dbReference type="Gene3D" id="3.55.50.30">
    <property type="match status" value="1"/>
</dbReference>
<dbReference type="Gene3D" id="2.40.170.20">
    <property type="entry name" value="TonB-dependent receptor, beta-barrel domain"/>
    <property type="match status" value="1"/>
</dbReference>
<dbReference type="Gene3D" id="2.170.130.10">
    <property type="entry name" value="TonB-dependent receptor, plug domain"/>
    <property type="match status" value="1"/>
</dbReference>
<dbReference type="InterPro" id="IPR012910">
    <property type="entry name" value="Plug_dom"/>
</dbReference>
<dbReference type="InterPro" id="IPR037066">
    <property type="entry name" value="Plug_dom_sf"/>
</dbReference>
<dbReference type="InterPro" id="IPR011662">
    <property type="entry name" value="Secretin/TonB_short_N"/>
</dbReference>
<dbReference type="InterPro" id="IPR039426">
    <property type="entry name" value="TonB-dep_rcpt-like"/>
</dbReference>
<dbReference type="InterPro" id="IPR000531">
    <property type="entry name" value="TonB-dep_rcpt_b-brl"/>
</dbReference>
<dbReference type="InterPro" id="IPR036942">
    <property type="entry name" value="TonB_rcpt_b-brl_sf"/>
</dbReference>
<dbReference type="InterPro" id="IPR010917">
    <property type="entry name" value="TonB_rcpt_CS"/>
</dbReference>
<dbReference type="InterPro" id="IPR010105">
    <property type="entry name" value="TonB_sidphr_rcpt"/>
</dbReference>
<dbReference type="NCBIfam" id="TIGR01783">
    <property type="entry name" value="TonB-siderophor"/>
    <property type="match status" value="1"/>
</dbReference>
<dbReference type="PANTHER" id="PTHR32552">
    <property type="entry name" value="FERRICHROME IRON RECEPTOR-RELATED"/>
    <property type="match status" value="1"/>
</dbReference>
<dbReference type="PANTHER" id="PTHR32552:SF74">
    <property type="entry name" value="HYDROXAMATE SIDEROPHORE RECEPTOR FHUE"/>
    <property type="match status" value="1"/>
</dbReference>
<dbReference type="Pfam" id="PF07715">
    <property type="entry name" value="Plug"/>
    <property type="match status" value="1"/>
</dbReference>
<dbReference type="Pfam" id="PF07660">
    <property type="entry name" value="STN"/>
    <property type="match status" value="1"/>
</dbReference>
<dbReference type="Pfam" id="PF00593">
    <property type="entry name" value="TonB_dep_Rec_b-barrel"/>
    <property type="match status" value="1"/>
</dbReference>
<dbReference type="SMART" id="SM00965">
    <property type="entry name" value="STN"/>
    <property type="match status" value="1"/>
</dbReference>
<dbReference type="SUPFAM" id="SSF56935">
    <property type="entry name" value="Porins"/>
    <property type="match status" value="1"/>
</dbReference>
<dbReference type="PROSITE" id="PS00430">
    <property type="entry name" value="TONB_DEPENDENT_REC_1"/>
    <property type="match status" value="1"/>
</dbReference>
<dbReference type="PROSITE" id="PS01156">
    <property type="entry name" value="TONB_DEPENDENT_REC_2"/>
    <property type="match status" value="1"/>
</dbReference>
<dbReference type="PROSITE" id="PS52016">
    <property type="entry name" value="TONB_DEPENDENT_REC_3"/>
    <property type="match status" value="1"/>
</dbReference>